<gene>
    <name type="ordered locus">SAHV_1780</name>
</gene>
<comment type="function">
    <text evidence="1">Could be involved in insertion of integral membrane proteins into the membrane.</text>
</comment>
<comment type="subcellular location">
    <subcellularLocation>
        <location evidence="1">Cell membrane</location>
        <topology evidence="1">Peripheral membrane protein</topology>
        <orientation evidence="1">Cytoplasmic side</orientation>
    </subcellularLocation>
</comment>
<comment type="similarity">
    <text evidence="1">Belongs to the UPF0161 family.</text>
</comment>
<evidence type="ECO:0000255" key="1">
    <source>
        <dbReference type="HAMAP-Rule" id="MF_00386"/>
    </source>
</evidence>
<evidence type="ECO:0000256" key="2">
    <source>
        <dbReference type="SAM" id="MobiDB-lite"/>
    </source>
</evidence>
<dbReference type="EMBL" id="AP009324">
    <property type="protein sequence ID" value="BAF78663.1"/>
    <property type="molecule type" value="Genomic_DNA"/>
</dbReference>
<dbReference type="KEGG" id="saw:SAHV_1780"/>
<dbReference type="HOGENOM" id="CLU_144811_6_0_9"/>
<dbReference type="GO" id="GO:0005886">
    <property type="term" value="C:plasma membrane"/>
    <property type="evidence" value="ECO:0007669"/>
    <property type="project" value="UniProtKB-SubCell"/>
</dbReference>
<dbReference type="HAMAP" id="MF_00386">
    <property type="entry name" value="UPF0161_YidD"/>
    <property type="match status" value="1"/>
</dbReference>
<dbReference type="InterPro" id="IPR002696">
    <property type="entry name" value="Membr_insert_effic_factor_YidD"/>
</dbReference>
<dbReference type="NCBIfam" id="TIGR00278">
    <property type="entry name" value="membrane protein insertion efficiency factor YidD"/>
    <property type="match status" value="1"/>
</dbReference>
<dbReference type="PANTHER" id="PTHR33383">
    <property type="entry name" value="MEMBRANE PROTEIN INSERTION EFFICIENCY FACTOR-RELATED"/>
    <property type="match status" value="1"/>
</dbReference>
<dbReference type="PANTHER" id="PTHR33383:SF1">
    <property type="entry name" value="MEMBRANE PROTEIN INSERTION EFFICIENCY FACTOR-RELATED"/>
    <property type="match status" value="1"/>
</dbReference>
<dbReference type="Pfam" id="PF01809">
    <property type="entry name" value="YidD"/>
    <property type="match status" value="1"/>
</dbReference>
<dbReference type="SMART" id="SM01234">
    <property type="entry name" value="Haemolytic"/>
    <property type="match status" value="1"/>
</dbReference>
<name>YIDD_STAA1</name>
<proteinExistence type="inferred from homology"/>
<reference key="1">
    <citation type="journal article" date="2008" name="Antimicrob. Agents Chemother.">
        <title>Mutated response regulator graR is responsible for phenotypic conversion of Staphylococcus aureus from heterogeneous vancomycin-intermediate resistance to vancomycin-intermediate resistance.</title>
        <authorList>
            <person name="Neoh H.-M."/>
            <person name="Cui L."/>
            <person name="Yuzawa H."/>
            <person name="Takeuchi F."/>
            <person name="Matsuo M."/>
            <person name="Hiramatsu K."/>
        </authorList>
    </citation>
    <scope>NUCLEOTIDE SEQUENCE [LARGE SCALE GENOMIC DNA]</scope>
    <source>
        <strain>Mu3 / ATCC 700698</strain>
    </source>
</reference>
<organism>
    <name type="scientific">Staphylococcus aureus (strain Mu3 / ATCC 700698)</name>
    <dbReference type="NCBI Taxonomy" id="418127"/>
    <lineage>
        <taxon>Bacteria</taxon>
        <taxon>Bacillati</taxon>
        <taxon>Bacillota</taxon>
        <taxon>Bacilli</taxon>
        <taxon>Bacillales</taxon>
        <taxon>Staphylococcaceae</taxon>
        <taxon>Staphylococcus</taxon>
    </lineage>
</organism>
<accession>A7X3N8</accession>
<protein>
    <recommendedName>
        <fullName evidence="1">Putative membrane protein insertion efficiency factor</fullName>
    </recommendedName>
</protein>
<keyword id="KW-1003">Cell membrane</keyword>
<keyword id="KW-0472">Membrane</keyword>
<sequence>MKKIFLAMIHFYQRFISPLTPPTCRFYPTCSEYTREAIQYHGAFKGLYLGIRRILKCHPLHKGGFDPVPLKKDKSASKHSHKHNH</sequence>
<feature type="chain" id="PRO_1000013134" description="Putative membrane protein insertion efficiency factor">
    <location>
        <begin position="1"/>
        <end position="85"/>
    </location>
</feature>
<feature type="region of interest" description="Disordered" evidence="2">
    <location>
        <begin position="62"/>
        <end position="85"/>
    </location>
</feature>